<reference key="1">
    <citation type="submission" date="2008-10" db="EMBL/GenBank/DDBJ databases">
        <title>Genome sequence of Bacillus cereus AH820.</title>
        <authorList>
            <person name="Dodson R.J."/>
            <person name="Durkin A.S."/>
            <person name="Rosovitz M.J."/>
            <person name="Rasko D.A."/>
            <person name="Hoffmaster A."/>
            <person name="Ravel J."/>
            <person name="Sutton G."/>
        </authorList>
    </citation>
    <scope>NUCLEOTIDE SEQUENCE [LARGE SCALE GENOMIC DNA]</scope>
    <source>
        <strain>AH820</strain>
    </source>
</reference>
<protein>
    <recommendedName>
        <fullName evidence="1">Small ribosomal subunit protein bS21</fullName>
    </recommendedName>
    <alternativeName>
        <fullName evidence="2">30S ribosomal protein S21</fullName>
    </alternativeName>
</protein>
<proteinExistence type="inferred from homology"/>
<accession>B7JN34</accession>
<gene>
    <name evidence="1" type="primary">rpsU</name>
    <name type="ordered locus">BCAH820_4331</name>
</gene>
<evidence type="ECO:0000255" key="1">
    <source>
        <dbReference type="HAMAP-Rule" id="MF_00358"/>
    </source>
</evidence>
<evidence type="ECO:0000305" key="2"/>
<dbReference type="EMBL" id="CP001283">
    <property type="protein sequence ID" value="ACK91282.1"/>
    <property type="molecule type" value="Genomic_DNA"/>
</dbReference>
<dbReference type="RefSeq" id="WP_000048061.1">
    <property type="nucleotide sequence ID" value="NC_011773.1"/>
</dbReference>
<dbReference type="SMR" id="B7JN34"/>
<dbReference type="GeneID" id="93006791"/>
<dbReference type="KEGG" id="bcu:BCAH820_4331"/>
<dbReference type="HOGENOM" id="CLU_159258_3_2_9"/>
<dbReference type="Proteomes" id="UP000001363">
    <property type="component" value="Chromosome"/>
</dbReference>
<dbReference type="GO" id="GO:1990904">
    <property type="term" value="C:ribonucleoprotein complex"/>
    <property type="evidence" value="ECO:0007669"/>
    <property type="project" value="UniProtKB-KW"/>
</dbReference>
<dbReference type="GO" id="GO:0005840">
    <property type="term" value="C:ribosome"/>
    <property type="evidence" value="ECO:0007669"/>
    <property type="project" value="UniProtKB-KW"/>
</dbReference>
<dbReference type="GO" id="GO:0003735">
    <property type="term" value="F:structural constituent of ribosome"/>
    <property type="evidence" value="ECO:0007669"/>
    <property type="project" value="InterPro"/>
</dbReference>
<dbReference type="GO" id="GO:0006412">
    <property type="term" value="P:translation"/>
    <property type="evidence" value="ECO:0007669"/>
    <property type="project" value="UniProtKB-UniRule"/>
</dbReference>
<dbReference type="Gene3D" id="1.20.5.1150">
    <property type="entry name" value="Ribosomal protein S8"/>
    <property type="match status" value="1"/>
</dbReference>
<dbReference type="HAMAP" id="MF_00358">
    <property type="entry name" value="Ribosomal_bS21"/>
    <property type="match status" value="1"/>
</dbReference>
<dbReference type="InterPro" id="IPR001911">
    <property type="entry name" value="Ribosomal_bS21"/>
</dbReference>
<dbReference type="InterPro" id="IPR018278">
    <property type="entry name" value="Ribosomal_bS21_CS"/>
</dbReference>
<dbReference type="InterPro" id="IPR038380">
    <property type="entry name" value="Ribosomal_bS21_sf"/>
</dbReference>
<dbReference type="NCBIfam" id="TIGR00030">
    <property type="entry name" value="S21p"/>
    <property type="match status" value="1"/>
</dbReference>
<dbReference type="PANTHER" id="PTHR21109">
    <property type="entry name" value="MITOCHONDRIAL 28S RIBOSOMAL PROTEIN S21"/>
    <property type="match status" value="1"/>
</dbReference>
<dbReference type="PANTHER" id="PTHR21109:SF22">
    <property type="entry name" value="SMALL RIBOSOMAL SUBUNIT PROTEIN BS21"/>
    <property type="match status" value="1"/>
</dbReference>
<dbReference type="Pfam" id="PF01165">
    <property type="entry name" value="Ribosomal_S21"/>
    <property type="match status" value="1"/>
</dbReference>
<dbReference type="PRINTS" id="PR00976">
    <property type="entry name" value="RIBOSOMALS21"/>
</dbReference>
<dbReference type="PROSITE" id="PS01181">
    <property type="entry name" value="RIBOSOMAL_S21"/>
    <property type="match status" value="1"/>
</dbReference>
<name>RS21_BACC0</name>
<keyword id="KW-0687">Ribonucleoprotein</keyword>
<keyword id="KW-0689">Ribosomal protein</keyword>
<feature type="chain" id="PRO_1000120584" description="Small ribosomal subunit protein bS21">
    <location>
        <begin position="1"/>
        <end position="57"/>
    </location>
</feature>
<comment type="similarity">
    <text evidence="1">Belongs to the bacterial ribosomal protein bS21 family.</text>
</comment>
<organism>
    <name type="scientific">Bacillus cereus (strain AH820)</name>
    <dbReference type="NCBI Taxonomy" id="405535"/>
    <lineage>
        <taxon>Bacteria</taxon>
        <taxon>Bacillati</taxon>
        <taxon>Bacillota</taxon>
        <taxon>Bacilli</taxon>
        <taxon>Bacillales</taxon>
        <taxon>Bacillaceae</taxon>
        <taxon>Bacillus</taxon>
        <taxon>Bacillus cereus group</taxon>
    </lineage>
</organism>
<sequence>MSKTVVRKNESLEDALRRFKRSVSKTGTLAEARKREFYEKPSVKRKKKSEAARKRKF</sequence>